<dbReference type="EMBL" id="CP000151">
    <property type="protein sequence ID" value="ABB10036.1"/>
    <property type="molecule type" value="Genomic_DNA"/>
</dbReference>
<dbReference type="RefSeq" id="WP_011353541.1">
    <property type="nucleotide sequence ID" value="NC_007510.1"/>
</dbReference>
<dbReference type="SMR" id="Q39BY0"/>
<dbReference type="GeneID" id="45096312"/>
<dbReference type="KEGG" id="bur:Bcep18194_A6442"/>
<dbReference type="PATRIC" id="fig|482957.22.peg.3473"/>
<dbReference type="HOGENOM" id="CLU_033123_0_0_4"/>
<dbReference type="Proteomes" id="UP000002705">
    <property type="component" value="Chromosome 1"/>
</dbReference>
<dbReference type="GO" id="GO:0009376">
    <property type="term" value="C:HslUV protease complex"/>
    <property type="evidence" value="ECO:0007669"/>
    <property type="project" value="UniProtKB-UniRule"/>
</dbReference>
<dbReference type="GO" id="GO:0005524">
    <property type="term" value="F:ATP binding"/>
    <property type="evidence" value="ECO:0007669"/>
    <property type="project" value="UniProtKB-UniRule"/>
</dbReference>
<dbReference type="GO" id="GO:0016887">
    <property type="term" value="F:ATP hydrolysis activity"/>
    <property type="evidence" value="ECO:0007669"/>
    <property type="project" value="InterPro"/>
</dbReference>
<dbReference type="GO" id="GO:0008233">
    <property type="term" value="F:peptidase activity"/>
    <property type="evidence" value="ECO:0007669"/>
    <property type="project" value="InterPro"/>
</dbReference>
<dbReference type="GO" id="GO:0036402">
    <property type="term" value="F:proteasome-activating activity"/>
    <property type="evidence" value="ECO:0007669"/>
    <property type="project" value="UniProtKB-UniRule"/>
</dbReference>
<dbReference type="GO" id="GO:0043335">
    <property type="term" value="P:protein unfolding"/>
    <property type="evidence" value="ECO:0007669"/>
    <property type="project" value="UniProtKB-UniRule"/>
</dbReference>
<dbReference type="GO" id="GO:0051603">
    <property type="term" value="P:proteolysis involved in protein catabolic process"/>
    <property type="evidence" value="ECO:0007669"/>
    <property type="project" value="TreeGrafter"/>
</dbReference>
<dbReference type="CDD" id="cd19498">
    <property type="entry name" value="RecA-like_HslU"/>
    <property type="match status" value="1"/>
</dbReference>
<dbReference type="FunFam" id="3.40.50.300:FF:000213">
    <property type="entry name" value="ATP-dependent protease ATPase subunit HslU"/>
    <property type="match status" value="1"/>
</dbReference>
<dbReference type="FunFam" id="3.40.50.300:FF:000220">
    <property type="entry name" value="ATP-dependent protease ATPase subunit HslU"/>
    <property type="match status" value="1"/>
</dbReference>
<dbReference type="Gene3D" id="1.10.8.60">
    <property type="match status" value="1"/>
</dbReference>
<dbReference type="Gene3D" id="1.10.8.10">
    <property type="entry name" value="DNA helicase RuvA subunit, C-terminal domain"/>
    <property type="match status" value="2"/>
</dbReference>
<dbReference type="Gene3D" id="3.40.50.300">
    <property type="entry name" value="P-loop containing nucleotide triphosphate hydrolases"/>
    <property type="match status" value="2"/>
</dbReference>
<dbReference type="HAMAP" id="MF_00249">
    <property type="entry name" value="HslU"/>
    <property type="match status" value="1"/>
</dbReference>
<dbReference type="InterPro" id="IPR003593">
    <property type="entry name" value="AAA+_ATPase"/>
</dbReference>
<dbReference type="InterPro" id="IPR050052">
    <property type="entry name" value="ATP-dep_Clp_protease_ClpX"/>
</dbReference>
<dbReference type="InterPro" id="IPR003959">
    <property type="entry name" value="ATPase_AAA_core"/>
</dbReference>
<dbReference type="InterPro" id="IPR019489">
    <property type="entry name" value="Clp_ATPase_C"/>
</dbReference>
<dbReference type="InterPro" id="IPR004491">
    <property type="entry name" value="HslU"/>
</dbReference>
<dbReference type="InterPro" id="IPR027417">
    <property type="entry name" value="P-loop_NTPase"/>
</dbReference>
<dbReference type="NCBIfam" id="TIGR00390">
    <property type="entry name" value="hslU"/>
    <property type="match status" value="1"/>
</dbReference>
<dbReference type="NCBIfam" id="NF003544">
    <property type="entry name" value="PRK05201.1"/>
    <property type="match status" value="1"/>
</dbReference>
<dbReference type="PANTHER" id="PTHR48102">
    <property type="entry name" value="ATP-DEPENDENT CLP PROTEASE ATP-BINDING SUBUNIT CLPX-LIKE, MITOCHONDRIAL-RELATED"/>
    <property type="match status" value="1"/>
</dbReference>
<dbReference type="PANTHER" id="PTHR48102:SF3">
    <property type="entry name" value="ATP-DEPENDENT PROTEASE ATPASE SUBUNIT HSLU"/>
    <property type="match status" value="1"/>
</dbReference>
<dbReference type="Pfam" id="PF00004">
    <property type="entry name" value="AAA"/>
    <property type="match status" value="1"/>
</dbReference>
<dbReference type="Pfam" id="PF07724">
    <property type="entry name" value="AAA_2"/>
    <property type="match status" value="1"/>
</dbReference>
<dbReference type="SMART" id="SM00382">
    <property type="entry name" value="AAA"/>
    <property type="match status" value="1"/>
</dbReference>
<dbReference type="SMART" id="SM01086">
    <property type="entry name" value="ClpB_D2-small"/>
    <property type="match status" value="1"/>
</dbReference>
<dbReference type="SUPFAM" id="SSF52540">
    <property type="entry name" value="P-loop containing nucleoside triphosphate hydrolases"/>
    <property type="match status" value="1"/>
</dbReference>
<proteinExistence type="inferred from homology"/>
<name>HSLU_BURL3</name>
<reference key="1">
    <citation type="submission" date="2005-10" db="EMBL/GenBank/DDBJ databases">
        <title>Complete sequence of chromosome 1 of Burkholderia sp. 383.</title>
        <authorList>
            <consortium name="US DOE Joint Genome Institute"/>
            <person name="Copeland A."/>
            <person name="Lucas S."/>
            <person name="Lapidus A."/>
            <person name="Barry K."/>
            <person name="Detter J.C."/>
            <person name="Glavina T."/>
            <person name="Hammon N."/>
            <person name="Israni S."/>
            <person name="Pitluck S."/>
            <person name="Chain P."/>
            <person name="Malfatti S."/>
            <person name="Shin M."/>
            <person name="Vergez L."/>
            <person name="Schmutz J."/>
            <person name="Larimer F."/>
            <person name="Land M."/>
            <person name="Kyrpides N."/>
            <person name="Lykidis A."/>
            <person name="Richardson P."/>
        </authorList>
    </citation>
    <scope>NUCLEOTIDE SEQUENCE [LARGE SCALE GENOMIC DNA]</scope>
    <source>
        <strain>ATCC 17760 / DSM 23089 / LMG 22485 / NCIMB 9086 / R18194 / 383</strain>
    </source>
</reference>
<organism>
    <name type="scientific">Burkholderia lata (strain ATCC 17760 / DSM 23089 / LMG 22485 / NCIMB 9086 / R18194 / 383)</name>
    <dbReference type="NCBI Taxonomy" id="482957"/>
    <lineage>
        <taxon>Bacteria</taxon>
        <taxon>Pseudomonadati</taxon>
        <taxon>Pseudomonadota</taxon>
        <taxon>Betaproteobacteria</taxon>
        <taxon>Burkholderiales</taxon>
        <taxon>Burkholderiaceae</taxon>
        <taxon>Burkholderia</taxon>
        <taxon>Burkholderia cepacia complex</taxon>
    </lineage>
</organism>
<feature type="chain" id="PRO_1000012720" description="ATP-dependent protease ATPase subunit HslU">
    <location>
        <begin position="1"/>
        <end position="447"/>
    </location>
</feature>
<feature type="binding site" evidence="1">
    <location>
        <position position="18"/>
    </location>
    <ligand>
        <name>ATP</name>
        <dbReference type="ChEBI" id="CHEBI:30616"/>
    </ligand>
</feature>
<feature type="binding site" evidence="1">
    <location>
        <begin position="60"/>
        <end position="65"/>
    </location>
    <ligand>
        <name>ATP</name>
        <dbReference type="ChEBI" id="CHEBI:30616"/>
    </ligand>
</feature>
<feature type="binding site" evidence="1">
    <location>
        <position position="259"/>
    </location>
    <ligand>
        <name>ATP</name>
        <dbReference type="ChEBI" id="CHEBI:30616"/>
    </ligand>
</feature>
<feature type="binding site" evidence="1">
    <location>
        <position position="325"/>
    </location>
    <ligand>
        <name>ATP</name>
        <dbReference type="ChEBI" id="CHEBI:30616"/>
    </ligand>
</feature>
<feature type="binding site" evidence="1">
    <location>
        <position position="397"/>
    </location>
    <ligand>
        <name>ATP</name>
        <dbReference type="ChEBI" id="CHEBI:30616"/>
    </ligand>
</feature>
<comment type="function">
    <text evidence="1">ATPase subunit of a proteasome-like degradation complex; this subunit has chaperone activity. The binding of ATP and its subsequent hydrolysis by HslU are essential for unfolding of protein substrates subsequently hydrolyzed by HslV. HslU recognizes the N-terminal part of its protein substrates and unfolds these before they are guided to HslV for hydrolysis.</text>
</comment>
<comment type="subunit">
    <text evidence="1">A double ring-shaped homohexamer of HslV is capped on each side by a ring-shaped HslU homohexamer. The assembly of the HslU/HslV complex is dependent on binding of ATP.</text>
</comment>
<comment type="subcellular location">
    <subcellularLocation>
        <location evidence="1">Cytoplasm</location>
    </subcellularLocation>
</comment>
<comment type="similarity">
    <text evidence="1">Belongs to the ClpX chaperone family. HslU subfamily.</text>
</comment>
<gene>
    <name evidence="1" type="primary">hslU</name>
    <name type="ordered locus">Bcep18194_A6442</name>
</gene>
<sequence length="447" mass="49853">MSTMTPAEIVSELDKHIIGQAKAKKAVAVALRNRWRRQQVADPLRQEITPKNILMIGPTGVGKTEIARRLAKLADAPFIKIEATKFTEVGYVGRDVDSIVRDLIEISVKQTRETEMRKVRSKATDQAEDRILDILLPQPRAVGFGGNAEHANDDNNATRQTFRKRLREGQLDDKEVELDIEQPSAGMDIMAPPGMEEMTEQIRSMFSNLGSGKKQRRKVKIKEALKLLTDEEAAKMLNDEEVKTKAVQNVEQNGIVFLDEIDKITSRNNEGSGGEVSRQGVQRDLLPLVEGTTVNTKYGMVKTDHILFIASGAFHLAKPSDLIPELQGRFPIRVELDSLSVNDFEAILVATDASLVKQYQALLATEDVQLEFADDGIRRLAEIAYSVNEKTENIGARRLYTVIEKLLEEVSFSAGNHAGERVTIDAKYVDRALGEVSQDEDLSRYVL</sequence>
<protein>
    <recommendedName>
        <fullName evidence="1">ATP-dependent protease ATPase subunit HslU</fullName>
    </recommendedName>
    <alternativeName>
        <fullName evidence="1">Unfoldase HslU</fullName>
    </alternativeName>
</protein>
<evidence type="ECO:0000255" key="1">
    <source>
        <dbReference type="HAMAP-Rule" id="MF_00249"/>
    </source>
</evidence>
<accession>Q39BY0</accession>
<keyword id="KW-0067">ATP-binding</keyword>
<keyword id="KW-0143">Chaperone</keyword>
<keyword id="KW-0963">Cytoplasm</keyword>
<keyword id="KW-0547">Nucleotide-binding</keyword>
<keyword id="KW-0346">Stress response</keyword>